<name>PSBL_PROHO</name>
<feature type="chain" id="PRO_0000219786" description="Photosystem II reaction center protein L">
    <location>
        <begin position="1"/>
        <end position="38"/>
    </location>
</feature>
<feature type="transmembrane region" description="Helical" evidence="1">
    <location>
        <begin position="17"/>
        <end position="37"/>
    </location>
</feature>
<reference key="1">
    <citation type="submission" date="2000-02" db="PIR data bank">
        <authorList>
            <person name="Bullerjahn G.S."/>
        </authorList>
    </citation>
    <scope>PROTEIN SEQUENCE</scope>
    <source>
        <strain>CCAP 1490/1 / SAG 10.89 / ACC 15-2</strain>
    </source>
</reference>
<accession>Q7M157</accession>
<organism>
    <name type="scientific">Prochlorothrix hollandica</name>
    <dbReference type="NCBI Taxonomy" id="1223"/>
    <lineage>
        <taxon>Bacteria</taxon>
        <taxon>Bacillati</taxon>
        <taxon>Cyanobacteriota</taxon>
        <taxon>Cyanophyceae</taxon>
        <taxon>Prochlorotrichales</taxon>
        <taxon>Prochlorotrichaceae</taxon>
        <taxon>Prochlorothrix</taxon>
    </lineage>
</organism>
<dbReference type="PIR" id="A59185">
    <property type="entry name" value="A59185"/>
</dbReference>
<dbReference type="SMR" id="Q7M157"/>
<dbReference type="GO" id="GO:0009539">
    <property type="term" value="C:photosystem II reaction center"/>
    <property type="evidence" value="ECO:0007669"/>
    <property type="project" value="InterPro"/>
</dbReference>
<dbReference type="GO" id="GO:0031676">
    <property type="term" value="C:plasma membrane-derived thylakoid membrane"/>
    <property type="evidence" value="ECO:0007669"/>
    <property type="project" value="UniProtKB-SubCell"/>
</dbReference>
<dbReference type="GO" id="GO:0015979">
    <property type="term" value="P:photosynthesis"/>
    <property type="evidence" value="ECO:0007669"/>
    <property type="project" value="UniProtKB-UniRule"/>
</dbReference>
<dbReference type="HAMAP" id="MF_01317">
    <property type="entry name" value="PSII_PsbL"/>
    <property type="match status" value="1"/>
</dbReference>
<dbReference type="InterPro" id="IPR003372">
    <property type="entry name" value="PSII_PsbL"/>
</dbReference>
<dbReference type="InterPro" id="IPR037266">
    <property type="entry name" value="PSII_PsbL_sf"/>
</dbReference>
<dbReference type="NCBIfam" id="NF001972">
    <property type="entry name" value="PRK00753.1"/>
    <property type="match status" value="1"/>
</dbReference>
<dbReference type="Pfam" id="PF02419">
    <property type="entry name" value="PsbL"/>
    <property type="match status" value="1"/>
</dbReference>
<dbReference type="SUPFAM" id="SSF161017">
    <property type="entry name" value="Photosystem II reaction center protein L, PsbL"/>
    <property type="match status" value="1"/>
</dbReference>
<gene>
    <name evidence="1" type="primary">psbL</name>
</gene>
<sequence length="38" mass="4358">MKNTNPNSQPVELNRTSLFLGRLLIFVLGILFSSYIFN</sequence>
<comment type="function">
    <text evidence="1">One of the components of the core complex of photosystem II (PSII). PSII is a light-driven water:plastoquinone oxidoreductase that uses light energy to abstract electrons from H(2)O, generating O(2) and a proton gradient subsequently used for ATP formation. It consists of a core antenna complex that captures photons, and an electron transfer chain that converts photonic excitation into a charge separation. This subunit is found at the monomer-monomer interface and is required for correct PSII assembly and/or dimerization.</text>
</comment>
<comment type="subunit">
    <text evidence="1">PSII is composed of 1 copy each of membrane proteins PsbA, PsbB, PsbC, PsbD, PsbE, PsbF, PsbH, PsbI, PsbJ, PsbK, PsbL, PsbM, PsbT, PsbX, PsbY, PsbZ, Psb30/Ycf12, peripheral proteins PsbO, CyanoQ (PsbQ), PsbU, PsbV and a large number of cofactors. It forms dimeric complexes.</text>
</comment>
<comment type="subcellular location">
    <subcellularLocation>
        <location evidence="1">Cellular thylakoid membrane</location>
        <topology evidence="1">Single-pass membrane protein</topology>
    </subcellularLocation>
</comment>
<comment type="similarity">
    <text evidence="1">Belongs to the PsbL family.</text>
</comment>
<proteinExistence type="evidence at protein level"/>
<keyword id="KW-0903">Direct protein sequencing</keyword>
<keyword id="KW-0472">Membrane</keyword>
<keyword id="KW-0602">Photosynthesis</keyword>
<keyword id="KW-0604">Photosystem II</keyword>
<keyword id="KW-0674">Reaction center</keyword>
<keyword id="KW-0793">Thylakoid</keyword>
<keyword id="KW-0812">Transmembrane</keyword>
<keyword id="KW-1133">Transmembrane helix</keyword>
<evidence type="ECO:0000255" key="1">
    <source>
        <dbReference type="HAMAP-Rule" id="MF_01317"/>
    </source>
</evidence>
<protein>
    <recommendedName>
        <fullName evidence="1">Photosystem II reaction center protein L</fullName>
        <shortName evidence="1">PSII-L</shortName>
    </recommendedName>
</protein>